<comment type="function">
    <text evidence="2 10">Protein kinase that regulates many aspects of mycobacterial physiology. Is a key component of a signal transduction pathway that regulates cell growth, cell shape and cell division via phosphorylation of target proteins (By similarity). Probably phosphorylates RseA (PubMed:20025669).</text>
</comment>
<comment type="catalytic activity">
    <reaction>
        <text>L-seryl-[protein] + ATP = O-phospho-L-seryl-[protein] + ADP + H(+)</text>
        <dbReference type="Rhea" id="RHEA:17989"/>
        <dbReference type="Rhea" id="RHEA-COMP:9863"/>
        <dbReference type="Rhea" id="RHEA-COMP:11604"/>
        <dbReference type="ChEBI" id="CHEBI:15378"/>
        <dbReference type="ChEBI" id="CHEBI:29999"/>
        <dbReference type="ChEBI" id="CHEBI:30616"/>
        <dbReference type="ChEBI" id="CHEBI:83421"/>
        <dbReference type="ChEBI" id="CHEBI:456216"/>
        <dbReference type="EC" id="2.7.11.1"/>
    </reaction>
</comment>
<comment type="catalytic activity">
    <reaction>
        <text>L-threonyl-[protein] + ATP = O-phospho-L-threonyl-[protein] + ADP + H(+)</text>
        <dbReference type="Rhea" id="RHEA:46608"/>
        <dbReference type="Rhea" id="RHEA-COMP:11060"/>
        <dbReference type="Rhea" id="RHEA-COMP:11605"/>
        <dbReference type="ChEBI" id="CHEBI:15378"/>
        <dbReference type="ChEBI" id="CHEBI:30013"/>
        <dbReference type="ChEBI" id="CHEBI:30616"/>
        <dbReference type="ChEBI" id="CHEBI:61977"/>
        <dbReference type="ChEBI" id="CHEBI:456216"/>
        <dbReference type="EC" id="2.7.11.1"/>
    </reaction>
</comment>
<comment type="activity regulation">
    <text evidence="10">By K-252a.</text>
</comment>
<comment type="subunit">
    <text evidence="1">Homodimer.</text>
</comment>
<comment type="subcellular location">
    <subcellularLocation>
        <location evidence="9">Cell membrane</location>
        <topology evidence="9">Single-pass membrane protein</topology>
    </subcellularLocation>
</comment>
<comment type="domain">
    <text evidence="1">The PASTA domains interact with peptidoglycans and are required for PknB localization.</text>
</comment>
<comment type="PTM">
    <text evidence="1">Autophosphorylated. Dephosphorylated by PstP (By similarity).</text>
</comment>
<comment type="disruption phenotype">
    <text evidence="8">When depleted (with anti-sense RNA) no vancomycin-induced degradation of RseA is seen.</text>
</comment>
<comment type="similarity">
    <text evidence="4">Belongs to the protein kinase superfamily. Ser/Thr protein kinase family.</text>
</comment>
<evidence type="ECO:0000250" key="1"/>
<evidence type="ECO:0000250" key="2">
    <source>
        <dbReference type="UniProtKB" id="P9WI81"/>
    </source>
</evidence>
<evidence type="ECO:0000255" key="3"/>
<evidence type="ECO:0000255" key="4">
    <source>
        <dbReference type="PROSITE-ProRule" id="PRU00159"/>
    </source>
</evidence>
<evidence type="ECO:0000255" key="5">
    <source>
        <dbReference type="PROSITE-ProRule" id="PRU00528"/>
    </source>
</evidence>
<evidence type="ECO:0000255" key="6">
    <source>
        <dbReference type="PROSITE-ProRule" id="PRU10027"/>
    </source>
</evidence>
<evidence type="ECO:0000256" key="7">
    <source>
        <dbReference type="SAM" id="MobiDB-lite"/>
    </source>
</evidence>
<evidence type="ECO:0000269" key="8">
    <source>
    </source>
</evidence>
<evidence type="ECO:0000305" key="9"/>
<evidence type="ECO:0000305" key="10">
    <source>
    </source>
</evidence>
<keyword id="KW-0067">ATP-binding</keyword>
<keyword id="KW-1003">Cell membrane</keyword>
<keyword id="KW-0418">Kinase</keyword>
<keyword id="KW-0460">Magnesium</keyword>
<keyword id="KW-0472">Membrane</keyword>
<keyword id="KW-0479">Metal-binding</keyword>
<keyword id="KW-0547">Nucleotide-binding</keyword>
<keyword id="KW-0597">Phosphoprotein</keyword>
<keyword id="KW-1185">Reference proteome</keyword>
<keyword id="KW-0677">Repeat</keyword>
<keyword id="KW-0723">Serine/threonine-protein kinase</keyword>
<keyword id="KW-0808">Transferase</keyword>
<keyword id="KW-0812">Transmembrane</keyword>
<keyword id="KW-1133">Transmembrane helix</keyword>
<feature type="chain" id="PRO_0000422953" description="Serine/threonine-protein kinase PknB">
    <location>
        <begin position="1"/>
        <end position="625"/>
    </location>
</feature>
<feature type="topological domain" description="Cytoplasmic" evidence="3">
    <location>
        <begin position="1"/>
        <end position="331"/>
    </location>
</feature>
<feature type="transmembrane region" description="Helical" evidence="3">
    <location>
        <begin position="332"/>
        <end position="352"/>
    </location>
</feature>
<feature type="topological domain" description="Extracellular" evidence="3">
    <location>
        <begin position="353"/>
        <end position="625"/>
    </location>
</feature>
<feature type="domain" description="Protein kinase" evidence="4">
    <location>
        <begin position="11"/>
        <end position="274"/>
    </location>
</feature>
<feature type="domain" description="PASTA 1" evidence="5">
    <location>
        <begin position="355"/>
        <end position="421"/>
    </location>
</feature>
<feature type="domain" description="PASTA 2" evidence="5">
    <location>
        <begin position="422"/>
        <end position="489"/>
    </location>
</feature>
<feature type="domain" description="PASTA 3" evidence="5">
    <location>
        <begin position="490"/>
        <end position="556"/>
    </location>
</feature>
<feature type="domain" description="PASTA 4" evidence="5">
    <location>
        <begin position="557"/>
        <end position="625"/>
    </location>
</feature>
<feature type="region of interest" description="Disordered" evidence="7">
    <location>
        <begin position="302"/>
        <end position="321"/>
    </location>
</feature>
<feature type="region of interest" description="Disordered" evidence="7">
    <location>
        <begin position="591"/>
        <end position="612"/>
    </location>
</feature>
<feature type="compositionally biased region" description="Polar residues" evidence="7">
    <location>
        <begin position="597"/>
        <end position="611"/>
    </location>
</feature>
<feature type="active site" description="Proton acceptor" evidence="4 6">
    <location>
        <position position="138"/>
    </location>
</feature>
<feature type="binding site" evidence="4">
    <location>
        <begin position="17"/>
        <end position="25"/>
    </location>
    <ligand>
        <name>ATP</name>
        <dbReference type="ChEBI" id="CHEBI:30616"/>
    </ligand>
</feature>
<feature type="binding site" evidence="4">
    <location>
        <position position="40"/>
    </location>
    <ligand>
        <name>ATP</name>
        <dbReference type="ChEBI" id="CHEBI:30616"/>
    </ligand>
</feature>
<feature type="binding site" evidence="4">
    <location>
        <begin position="93"/>
        <end position="95"/>
    </location>
    <ligand>
        <name>ATP</name>
        <dbReference type="ChEBI" id="CHEBI:30616"/>
    </ligand>
</feature>
<feature type="binding site" evidence="4">
    <location>
        <begin position="140"/>
        <end position="143"/>
    </location>
    <ligand>
        <name>ATP</name>
        <dbReference type="ChEBI" id="CHEBI:30616"/>
    </ligand>
</feature>
<feature type="binding site" evidence="1">
    <location>
        <position position="143"/>
    </location>
    <ligand>
        <name>Mg(2+)</name>
        <dbReference type="ChEBI" id="CHEBI:18420"/>
    </ligand>
</feature>
<feature type="binding site" evidence="4">
    <location>
        <position position="156"/>
    </location>
    <ligand>
        <name>ATP</name>
        <dbReference type="ChEBI" id="CHEBI:30616"/>
    </ligand>
</feature>
<feature type="binding site" evidence="1">
    <location>
        <position position="156"/>
    </location>
    <ligand>
        <name>Mg(2+)</name>
        <dbReference type="ChEBI" id="CHEBI:18420"/>
    </ligand>
</feature>
<feature type="modified residue" description="Phosphoserine; by autocatalysis" evidence="1">
    <location>
        <position position="169"/>
    </location>
</feature>
<feature type="modified residue" description="Phosphothreonine; by autocatalysis" evidence="1">
    <location>
        <position position="171"/>
    </location>
</feature>
<feature type="modified residue" description="Phosphothreonine; by autocatalysis" evidence="1">
    <location>
        <position position="173"/>
    </location>
</feature>
<feature type="modified residue" description="Phosphothreonine; by autocatalysis" evidence="1">
    <location>
        <position position="294"/>
    </location>
</feature>
<feature type="modified residue" description="Phosphoserine; by autocatalysis" evidence="1">
    <location>
        <position position="295"/>
    </location>
</feature>
<feature type="modified residue" description="Phosphothreonine; by autocatalysis" evidence="1">
    <location>
        <position position="309"/>
    </location>
</feature>
<reference key="1">
    <citation type="submission" date="2006-10" db="EMBL/GenBank/DDBJ databases">
        <authorList>
            <person name="Fleischmann R.D."/>
            <person name="Dodson R.J."/>
            <person name="Haft D.H."/>
            <person name="Merkel J.S."/>
            <person name="Nelson W.C."/>
            <person name="Fraser C.M."/>
        </authorList>
    </citation>
    <scope>NUCLEOTIDE SEQUENCE [LARGE SCALE GENOMIC DNA]</scope>
    <source>
        <strain>ATCC 700084 / mc(2)155</strain>
    </source>
</reference>
<reference key="2">
    <citation type="journal article" date="2007" name="Genome Biol.">
        <title>Interrupted coding sequences in Mycobacterium smegmatis: authentic mutations or sequencing errors?</title>
        <authorList>
            <person name="Deshayes C."/>
            <person name="Perrodou E."/>
            <person name="Gallien S."/>
            <person name="Euphrasie D."/>
            <person name="Schaeffer C."/>
            <person name="Van-Dorsselaer A."/>
            <person name="Poch O."/>
            <person name="Lecompte O."/>
            <person name="Reyrat J.-M."/>
        </authorList>
    </citation>
    <scope>NUCLEOTIDE SEQUENCE [LARGE SCALE GENOMIC DNA]</scope>
    <source>
        <strain>ATCC 700084 / mc(2)155</strain>
    </source>
</reference>
<reference key="3">
    <citation type="journal article" date="2009" name="Genome Res.">
        <title>Ortho-proteogenomics: multiple proteomes investigation through orthology and a new MS-based protocol.</title>
        <authorList>
            <person name="Gallien S."/>
            <person name="Perrodou E."/>
            <person name="Carapito C."/>
            <person name="Deshayes C."/>
            <person name="Reyrat J.-M."/>
            <person name="Van Dorsselaer A."/>
            <person name="Poch O."/>
            <person name="Schaeffer C."/>
            <person name="Lecompte O."/>
        </authorList>
    </citation>
    <scope>NUCLEOTIDE SEQUENCE [LARGE SCALE GENOMIC DNA]</scope>
    <source>
        <strain>ATCC 700084 / mc(2)155</strain>
    </source>
</reference>
<reference key="4">
    <citation type="journal article" date="2010" name="Mol. Microbiol.">
        <title>RseA, the SigE specific anti-sigma factor of Mycobacterium tuberculosis, is inactivated by phosphorylation-dependent ClpC1P2 proteolysis.</title>
        <authorList>
            <person name="Barik S."/>
            <person name="Sureka K."/>
            <person name="Mukherjee P."/>
            <person name="Basu J."/>
            <person name="Kundu M."/>
        </authorList>
    </citation>
    <scope>PROBABLE FUNCTION AS A KINASE WITH RSEA AS A SUBSTRATE</scope>
    <scope>ACTIVITY REGULATION</scope>
    <scope>DISRUPTION PHENOTYPE</scope>
    <source>
        <strain>ATCC 700084 / mc(2)155</strain>
    </source>
</reference>
<organism>
    <name type="scientific">Mycolicibacterium smegmatis (strain ATCC 700084 / mc(2)155)</name>
    <name type="common">Mycobacterium smegmatis</name>
    <dbReference type="NCBI Taxonomy" id="246196"/>
    <lineage>
        <taxon>Bacteria</taxon>
        <taxon>Bacillati</taxon>
        <taxon>Actinomycetota</taxon>
        <taxon>Actinomycetes</taxon>
        <taxon>Mycobacteriales</taxon>
        <taxon>Mycobacteriaceae</taxon>
        <taxon>Mycolicibacterium</taxon>
    </lineage>
</organism>
<accession>A0QNG1</accession>
<sequence length="625" mass="66318">MTTPQHLSDRYELGEILGFGGMSEVHLARDLRLHRDVAVKVLRADLARDPSFYLRFRREAQNAAALNHPAIVAVYDTGEAETPNGPLPYIVMEYVDGVTLRDIVHTDGPIAPRRAIEIIADACQALNFSHQHGIIHRDVKPANIMISKNNAVKVMDFGIARALADTGNSVTQTAAVIGTAQYLSPEQARGETVDARSDVYSLGCVLYEILTGEPPFIGDSPVAVAYQHVREDPVPPSRRHADVTPELDAVVLKALAKNPDNRYQTAAEMRADLIRVHEGQAPDAPKVLTDAERTSMLAAPPADRAGAATQDMPVPRPAGYSKQRSTSVARWLIAVAVLAVLTVVVTVAINMVGGNPRNVQVPDVAEQSADDAQAALQNRGFKTVIDRQPDNEVPPGLVIGTDPEAGSELGAGEQVTINVSTGPEQALVPDVAGLTPTQARQKLKDAGFEKFRESPSPSTPEQKGRVLATNPQANQTAAIINEITIVVGAGPEDAPVLSCAGQNAESCKAILAAGGFTNTVVVEVDNPAAAGQVVGTEPADGQSVPKDTVIQIRVSKGNQFVMPDLVGQFWSDAYPRLTALGWTGVLDKGPDVRDSGQRTNAVVTQSPSAGTPVNKDAKITLSFAA</sequence>
<dbReference type="EC" id="2.7.11.1"/>
<dbReference type="EMBL" id="CP000480">
    <property type="protein sequence ID" value="ABK74027.1"/>
    <property type="molecule type" value="Genomic_DNA"/>
</dbReference>
<dbReference type="EMBL" id="CP001663">
    <property type="protein sequence ID" value="AFP36514.1"/>
    <property type="molecule type" value="Genomic_DNA"/>
</dbReference>
<dbReference type="RefSeq" id="WP_003891355.1">
    <property type="nucleotide sequence ID" value="NZ_SIJM01000001.1"/>
</dbReference>
<dbReference type="RefSeq" id="YP_884449.1">
    <property type="nucleotide sequence ID" value="NC_008596.1"/>
</dbReference>
<dbReference type="SMR" id="A0QNG1"/>
<dbReference type="STRING" id="246196.MSMEG_0028"/>
<dbReference type="PaxDb" id="246196-MSMEI_0031"/>
<dbReference type="GeneID" id="93454955"/>
<dbReference type="KEGG" id="msb:LJ00_00145"/>
<dbReference type="KEGG" id="msg:MSMEI_0031"/>
<dbReference type="KEGG" id="msm:MSMEG_0028"/>
<dbReference type="PATRIC" id="fig|246196.19.peg.27"/>
<dbReference type="eggNOG" id="COG0515">
    <property type="taxonomic scope" value="Bacteria"/>
</dbReference>
<dbReference type="eggNOG" id="COG2815">
    <property type="taxonomic scope" value="Bacteria"/>
</dbReference>
<dbReference type="OrthoDB" id="9762169at2"/>
<dbReference type="Proteomes" id="UP000000757">
    <property type="component" value="Chromosome"/>
</dbReference>
<dbReference type="Proteomes" id="UP000006158">
    <property type="component" value="Chromosome"/>
</dbReference>
<dbReference type="GO" id="GO:0005886">
    <property type="term" value="C:plasma membrane"/>
    <property type="evidence" value="ECO:0007669"/>
    <property type="project" value="UniProtKB-SubCell"/>
</dbReference>
<dbReference type="GO" id="GO:0005524">
    <property type="term" value="F:ATP binding"/>
    <property type="evidence" value="ECO:0007669"/>
    <property type="project" value="UniProtKB-KW"/>
</dbReference>
<dbReference type="GO" id="GO:0046872">
    <property type="term" value="F:metal ion binding"/>
    <property type="evidence" value="ECO:0007669"/>
    <property type="project" value="UniProtKB-KW"/>
</dbReference>
<dbReference type="GO" id="GO:0106310">
    <property type="term" value="F:protein serine kinase activity"/>
    <property type="evidence" value="ECO:0007669"/>
    <property type="project" value="RHEA"/>
</dbReference>
<dbReference type="GO" id="GO:0004674">
    <property type="term" value="F:protein serine/threonine kinase activity"/>
    <property type="evidence" value="ECO:0007669"/>
    <property type="project" value="UniProtKB-KW"/>
</dbReference>
<dbReference type="GO" id="GO:0080090">
    <property type="term" value="P:regulation of primary metabolic process"/>
    <property type="evidence" value="ECO:0007669"/>
    <property type="project" value="UniProtKB-ARBA"/>
</dbReference>
<dbReference type="CDD" id="cd06577">
    <property type="entry name" value="PASTA_pknB"/>
    <property type="match status" value="4"/>
</dbReference>
<dbReference type="CDD" id="cd14014">
    <property type="entry name" value="STKc_PknB_like"/>
    <property type="match status" value="1"/>
</dbReference>
<dbReference type="FunFam" id="1.10.510.10:FF:000021">
    <property type="entry name" value="Serine/threonine protein kinase"/>
    <property type="match status" value="1"/>
</dbReference>
<dbReference type="FunFam" id="3.30.200.20:FF:000035">
    <property type="entry name" value="Serine/threonine protein kinase Stk1"/>
    <property type="match status" value="1"/>
</dbReference>
<dbReference type="Gene3D" id="3.30.10.20">
    <property type="match status" value="4"/>
</dbReference>
<dbReference type="Gene3D" id="3.30.200.20">
    <property type="entry name" value="Phosphorylase Kinase, domain 1"/>
    <property type="match status" value="1"/>
</dbReference>
<dbReference type="Gene3D" id="1.10.510.10">
    <property type="entry name" value="Transferase(Phosphotransferase) domain 1"/>
    <property type="match status" value="1"/>
</dbReference>
<dbReference type="InterPro" id="IPR011009">
    <property type="entry name" value="Kinase-like_dom_sf"/>
</dbReference>
<dbReference type="InterPro" id="IPR005543">
    <property type="entry name" value="PASTA_dom"/>
</dbReference>
<dbReference type="InterPro" id="IPR000719">
    <property type="entry name" value="Prot_kinase_dom"/>
</dbReference>
<dbReference type="InterPro" id="IPR017441">
    <property type="entry name" value="Protein_kinase_ATP_BS"/>
</dbReference>
<dbReference type="InterPro" id="IPR008271">
    <property type="entry name" value="Ser/Thr_kinase_AS"/>
</dbReference>
<dbReference type="NCBIfam" id="NF033483">
    <property type="entry name" value="PknB_PASTA_kin"/>
    <property type="match status" value="1"/>
</dbReference>
<dbReference type="PANTHER" id="PTHR43289">
    <property type="entry name" value="MITOGEN-ACTIVATED PROTEIN KINASE KINASE KINASE 20-RELATED"/>
    <property type="match status" value="1"/>
</dbReference>
<dbReference type="PANTHER" id="PTHR43289:SF6">
    <property type="entry name" value="SERINE_THREONINE-PROTEIN KINASE NEKL-3"/>
    <property type="match status" value="1"/>
</dbReference>
<dbReference type="Pfam" id="PF03793">
    <property type="entry name" value="PASTA"/>
    <property type="match status" value="4"/>
</dbReference>
<dbReference type="Pfam" id="PF00069">
    <property type="entry name" value="Pkinase"/>
    <property type="match status" value="1"/>
</dbReference>
<dbReference type="SMART" id="SM00740">
    <property type="entry name" value="PASTA"/>
    <property type="match status" value="4"/>
</dbReference>
<dbReference type="SMART" id="SM00220">
    <property type="entry name" value="S_TKc"/>
    <property type="match status" value="1"/>
</dbReference>
<dbReference type="SUPFAM" id="SSF56112">
    <property type="entry name" value="Protein kinase-like (PK-like)"/>
    <property type="match status" value="1"/>
</dbReference>
<dbReference type="PROSITE" id="PS51178">
    <property type="entry name" value="PASTA"/>
    <property type="match status" value="4"/>
</dbReference>
<dbReference type="PROSITE" id="PS00107">
    <property type="entry name" value="PROTEIN_KINASE_ATP"/>
    <property type="match status" value="1"/>
</dbReference>
<dbReference type="PROSITE" id="PS50011">
    <property type="entry name" value="PROTEIN_KINASE_DOM"/>
    <property type="match status" value="1"/>
</dbReference>
<dbReference type="PROSITE" id="PS00108">
    <property type="entry name" value="PROTEIN_KINASE_ST"/>
    <property type="match status" value="1"/>
</dbReference>
<protein>
    <recommendedName>
        <fullName>Serine/threonine-protein kinase PknB</fullName>
        <ecNumber>2.7.11.1</ecNumber>
    </recommendedName>
</protein>
<proteinExistence type="evidence at protein level"/>
<name>PKNB_MYCS2</name>
<gene>
    <name type="primary">pknB</name>
    <name type="ordered locus">MSMEG_0028</name>
    <name type="ordered locus">MSMEI_0031</name>
</gene>